<sequence length="74" mass="7636">MNGPRYAHSNYGGNKGGPSNSTSGVFAGDIRCQVSNKSIMLISLKITNSPNSNSRGSSSSSSTSKSSSKTSFTQ</sequence>
<name>Y9576_DICDI</name>
<comment type="subcellular location">
    <subcellularLocation>
        <location evidence="3">Membrane</location>
        <topology evidence="3">Single-pass membrane protein</topology>
    </subcellularLocation>
</comment>
<comment type="caution">
    <text evidence="3">Product of a dubious gene prediction.</text>
</comment>
<comment type="sequence caution" evidence="3">
    <conflict type="erroneous gene model prediction">
        <sequence resource="EMBL-CDS" id="EAL62189"/>
    </conflict>
</comment>
<accession>Q54FX7</accession>
<protein>
    <recommendedName>
        <fullName>Putative uncharacterized transmembrane protein DDB_G0290657</fullName>
    </recommendedName>
</protein>
<gene>
    <name type="ORF">DDB_G0290657</name>
</gene>
<evidence type="ECO:0000255" key="1"/>
<evidence type="ECO:0000256" key="2">
    <source>
        <dbReference type="SAM" id="MobiDB-lite"/>
    </source>
</evidence>
<evidence type="ECO:0000305" key="3"/>
<keyword id="KW-0472">Membrane</keyword>
<keyword id="KW-1185">Reference proteome</keyword>
<keyword id="KW-0812">Transmembrane</keyword>
<keyword id="KW-1133">Transmembrane helix</keyword>
<proteinExistence type="uncertain"/>
<organism>
    <name type="scientific">Dictyostelium discoideum</name>
    <name type="common">Social amoeba</name>
    <dbReference type="NCBI Taxonomy" id="44689"/>
    <lineage>
        <taxon>Eukaryota</taxon>
        <taxon>Amoebozoa</taxon>
        <taxon>Evosea</taxon>
        <taxon>Eumycetozoa</taxon>
        <taxon>Dictyostelia</taxon>
        <taxon>Dictyosteliales</taxon>
        <taxon>Dictyosteliaceae</taxon>
        <taxon>Dictyostelium</taxon>
    </lineage>
</organism>
<reference key="1">
    <citation type="journal article" date="2005" name="Nature">
        <title>The genome of the social amoeba Dictyostelium discoideum.</title>
        <authorList>
            <person name="Eichinger L."/>
            <person name="Pachebat J.A."/>
            <person name="Gloeckner G."/>
            <person name="Rajandream M.A."/>
            <person name="Sucgang R."/>
            <person name="Berriman M."/>
            <person name="Song J."/>
            <person name="Olsen R."/>
            <person name="Szafranski K."/>
            <person name="Xu Q."/>
            <person name="Tunggal B."/>
            <person name="Kummerfeld S."/>
            <person name="Madera M."/>
            <person name="Konfortov B.A."/>
            <person name="Rivero F."/>
            <person name="Bankier A.T."/>
            <person name="Lehmann R."/>
            <person name="Hamlin N."/>
            <person name="Davies R."/>
            <person name="Gaudet P."/>
            <person name="Fey P."/>
            <person name="Pilcher K."/>
            <person name="Chen G."/>
            <person name="Saunders D."/>
            <person name="Sodergren E.J."/>
            <person name="Davis P."/>
            <person name="Kerhornou A."/>
            <person name="Nie X."/>
            <person name="Hall N."/>
            <person name="Anjard C."/>
            <person name="Hemphill L."/>
            <person name="Bason N."/>
            <person name="Farbrother P."/>
            <person name="Desany B."/>
            <person name="Just E."/>
            <person name="Morio T."/>
            <person name="Rost R."/>
            <person name="Churcher C.M."/>
            <person name="Cooper J."/>
            <person name="Haydock S."/>
            <person name="van Driessche N."/>
            <person name="Cronin A."/>
            <person name="Goodhead I."/>
            <person name="Muzny D.M."/>
            <person name="Mourier T."/>
            <person name="Pain A."/>
            <person name="Lu M."/>
            <person name="Harper D."/>
            <person name="Lindsay R."/>
            <person name="Hauser H."/>
            <person name="James K.D."/>
            <person name="Quiles M."/>
            <person name="Madan Babu M."/>
            <person name="Saito T."/>
            <person name="Buchrieser C."/>
            <person name="Wardroper A."/>
            <person name="Felder M."/>
            <person name="Thangavelu M."/>
            <person name="Johnson D."/>
            <person name="Knights A."/>
            <person name="Loulseged H."/>
            <person name="Mungall K.L."/>
            <person name="Oliver K."/>
            <person name="Price C."/>
            <person name="Quail M.A."/>
            <person name="Urushihara H."/>
            <person name="Hernandez J."/>
            <person name="Rabbinowitsch E."/>
            <person name="Steffen D."/>
            <person name="Sanders M."/>
            <person name="Ma J."/>
            <person name="Kohara Y."/>
            <person name="Sharp S."/>
            <person name="Simmonds M.N."/>
            <person name="Spiegler S."/>
            <person name="Tivey A."/>
            <person name="Sugano S."/>
            <person name="White B."/>
            <person name="Walker D."/>
            <person name="Woodward J.R."/>
            <person name="Winckler T."/>
            <person name="Tanaka Y."/>
            <person name="Shaulsky G."/>
            <person name="Schleicher M."/>
            <person name="Weinstock G.M."/>
            <person name="Rosenthal A."/>
            <person name="Cox E.C."/>
            <person name="Chisholm R.L."/>
            <person name="Gibbs R.A."/>
            <person name="Loomis W.F."/>
            <person name="Platzer M."/>
            <person name="Kay R.R."/>
            <person name="Williams J.G."/>
            <person name="Dear P.H."/>
            <person name="Noegel A.A."/>
            <person name="Barrell B.G."/>
            <person name="Kuspa A."/>
        </authorList>
    </citation>
    <scope>NUCLEOTIDE SEQUENCE [LARGE SCALE GENOMIC DNA]</scope>
    <source>
        <strain>AX4</strain>
    </source>
</reference>
<feature type="chain" id="PRO_0000346909" description="Putative uncharacterized transmembrane protein DDB_G0290657">
    <location>
        <begin position="1"/>
        <end position="74"/>
    </location>
</feature>
<feature type="transmembrane region" description="Helical" evidence="1">
    <location>
        <begin position="34"/>
        <end position="50"/>
    </location>
</feature>
<feature type="region of interest" description="Disordered" evidence="2">
    <location>
        <begin position="1"/>
        <end position="26"/>
    </location>
</feature>
<feature type="region of interest" description="Disordered" evidence="2">
    <location>
        <begin position="46"/>
        <end position="74"/>
    </location>
</feature>
<feature type="compositionally biased region" description="Low complexity" evidence="2">
    <location>
        <begin position="47"/>
        <end position="74"/>
    </location>
</feature>
<dbReference type="EMBL" id="AAFI02000164">
    <property type="protein sequence ID" value="EAL62189.1"/>
    <property type="status" value="ALT_SEQ"/>
    <property type="molecule type" value="Genomic_DNA"/>
</dbReference>
<dbReference type="RefSeq" id="XP_635640.1">
    <property type="nucleotide sequence ID" value="XM_630548.1"/>
</dbReference>
<dbReference type="PaxDb" id="44689-DDB0219576"/>
<dbReference type="EnsemblProtists" id="EAL62189">
    <property type="protein sequence ID" value="EAL62189"/>
    <property type="gene ID" value="DDB_G0290657"/>
</dbReference>
<dbReference type="GeneID" id="8627712"/>
<dbReference type="KEGG" id="ddi:DDB_G0290657"/>
<dbReference type="dictyBase" id="DDB_G0290657"/>
<dbReference type="InParanoid" id="Q54FX7"/>
<dbReference type="Proteomes" id="UP000002195">
    <property type="component" value="Chromosome 5"/>
</dbReference>
<dbReference type="GO" id="GO:0016020">
    <property type="term" value="C:membrane"/>
    <property type="evidence" value="ECO:0007669"/>
    <property type="project" value="UniProtKB-SubCell"/>
</dbReference>